<feature type="chain" id="PRO_0000125643" description="Large ribosomal subunit protein uL1">
    <location>
        <begin position="1"/>
        <end position="231"/>
    </location>
</feature>
<gene>
    <name evidence="1" type="primary">rplA</name>
    <name type="ordered locus">CV_4196</name>
</gene>
<sequence>MAKISKRLQNLKATVDRNKLYAVDEAIALVKAAATAKFDESIDIAVNLGVDPRKSDQVVRGSVVLPRGTGKSVRVAVFAQGANAEAAKAAGAEVVGFDDLAEQVKAGNLDFDVVIASPDAMRVVGQLGQILGPRGLMPNPKVGTVTPNVAEAVKNAKAGQVQYRTDKAGIIHATIGRASFEAEALRENFSALVDALVKAKPAASKGVYLKKIAVSSTMGIGARVDTATVNA</sequence>
<keyword id="KW-1185">Reference proteome</keyword>
<keyword id="KW-0678">Repressor</keyword>
<keyword id="KW-0687">Ribonucleoprotein</keyword>
<keyword id="KW-0689">Ribosomal protein</keyword>
<keyword id="KW-0694">RNA-binding</keyword>
<keyword id="KW-0699">rRNA-binding</keyword>
<keyword id="KW-0810">Translation regulation</keyword>
<keyword id="KW-0820">tRNA-binding</keyword>
<dbReference type="EMBL" id="AE016825">
    <property type="protein sequence ID" value="AAQ61856.1"/>
    <property type="molecule type" value="Genomic_DNA"/>
</dbReference>
<dbReference type="RefSeq" id="WP_011137743.1">
    <property type="nucleotide sequence ID" value="NC_005085.1"/>
</dbReference>
<dbReference type="SMR" id="Q7NQE3"/>
<dbReference type="STRING" id="243365.CV_4196"/>
<dbReference type="GeneID" id="66366331"/>
<dbReference type="KEGG" id="cvi:CV_4196"/>
<dbReference type="eggNOG" id="COG0081">
    <property type="taxonomic scope" value="Bacteria"/>
</dbReference>
<dbReference type="HOGENOM" id="CLU_062853_0_0_4"/>
<dbReference type="OrthoDB" id="9803740at2"/>
<dbReference type="Proteomes" id="UP000001424">
    <property type="component" value="Chromosome"/>
</dbReference>
<dbReference type="GO" id="GO:0022625">
    <property type="term" value="C:cytosolic large ribosomal subunit"/>
    <property type="evidence" value="ECO:0007669"/>
    <property type="project" value="TreeGrafter"/>
</dbReference>
<dbReference type="GO" id="GO:0019843">
    <property type="term" value="F:rRNA binding"/>
    <property type="evidence" value="ECO:0007669"/>
    <property type="project" value="UniProtKB-UniRule"/>
</dbReference>
<dbReference type="GO" id="GO:0003735">
    <property type="term" value="F:structural constituent of ribosome"/>
    <property type="evidence" value="ECO:0007669"/>
    <property type="project" value="InterPro"/>
</dbReference>
<dbReference type="GO" id="GO:0000049">
    <property type="term" value="F:tRNA binding"/>
    <property type="evidence" value="ECO:0007669"/>
    <property type="project" value="UniProtKB-KW"/>
</dbReference>
<dbReference type="GO" id="GO:0006417">
    <property type="term" value="P:regulation of translation"/>
    <property type="evidence" value="ECO:0007669"/>
    <property type="project" value="UniProtKB-KW"/>
</dbReference>
<dbReference type="GO" id="GO:0006412">
    <property type="term" value="P:translation"/>
    <property type="evidence" value="ECO:0007669"/>
    <property type="project" value="UniProtKB-UniRule"/>
</dbReference>
<dbReference type="CDD" id="cd00403">
    <property type="entry name" value="Ribosomal_L1"/>
    <property type="match status" value="1"/>
</dbReference>
<dbReference type="FunFam" id="3.40.50.790:FF:000001">
    <property type="entry name" value="50S ribosomal protein L1"/>
    <property type="match status" value="1"/>
</dbReference>
<dbReference type="Gene3D" id="3.30.190.20">
    <property type="match status" value="1"/>
</dbReference>
<dbReference type="Gene3D" id="3.40.50.790">
    <property type="match status" value="1"/>
</dbReference>
<dbReference type="HAMAP" id="MF_01318_B">
    <property type="entry name" value="Ribosomal_uL1_B"/>
    <property type="match status" value="1"/>
</dbReference>
<dbReference type="InterPro" id="IPR005878">
    <property type="entry name" value="Ribosom_uL1_bac-type"/>
</dbReference>
<dbReference type="InterPro" id="IPR002143">
    <property type="entry name" value="Ribosomal_uL1"/>
</dbReference>
<dbReference type="InterPro" id="IPR023674">
    <property type="entry name" value="Ribosomal_uL1-like"/>
</dbReference>
<dbReference type="InterPro" id="IPR028364">
    <property type="entry name" value="Ribosomal_uL1/biogenesis"/>
</dbReference>
<dbReference type="InterPro" id="IPR016095">
    <property type="entry name" value="Ribosomal_uL1_3-a/b-sand"/>
</dbReference>
<dbReference type="InterPro" id="IPR023673">
    <property type="entry name" value="Ribosomal_uL1_CS"/>
</dbReference>
<dbReference type="NCBIfam" id="TIGR01169">
    <property type="entry name" value="rplA_bact"/>
    <property type="match status" value="1"/>
</dbReference>
<dbReference type="PANTHER" id="PTHR36427">
    <property type="entry name" value="54S RIBOSOMAL PROTEIN L1, MITOCHONDRIAL"/>
    <property type="match status" value="1"/>
</dbReference>
<dbReference type="PANTHER" id="PTHR36427:SF3">
    <property type="entry name" value="LARGE RIBOSOMAL SUBUNIT PROTEIN UL1M"/>
    <property type="match status" value="1"/>
</dbReference>
<dbReference type="Pfam" id="PF00687">
    <property type="entry name" value="Ribosomal_L1"/>
    <property type="match status" value="1"/>
</dbReference>
<dbReference type="PIRSF" id="PIRSF002155">
    <property type="entry name" value="Ribosomal_L1"/>
    <property type="match status" value="1"/>
</dbReference>
<dbReference type="SUPFAM" id="SSF56808">
    <property type="entry name" value="Ribosomal protein L1"/>
    <property type="match status" value="1"/>
</dbReference>
<dbReference type="PROSITE" id="PS01199">
    <property type="entry name" value="RIBOSOMAL_L1"/>
    <property type="match status" value="1"/>
</dbReference>
<name>RL1_CHRVO</name>
<evidence type="ECO:0000255" key="1">
    <source>
        <dbReference type="HAMAP-Rule" id="MF_01318"/>
    </source>
</evidence>
<evidence type="ECO:0000305" key="2"/>
<reference key="1">
    <citation type="journal article" date="2003" name="Proc. Natl. Acad. Sci. U.S.A.">
        <title>The complete genome sequence of Chromobacterium violaceum reveals remarkable and exploitable bacterial adaptability.</title>
        <authorList>
            <person name="Vasconcelos A.T.R."/>
            <person name="de Almeida D.F."/>
            <person name="Hungria M."/>
            <person name="Guimaraes C.T."/>
            <person name="Antonio R.V."/>
            <person name="Almeida F.C."/>
            <person name="de Almeida L.G.P."/>
            <person name="de Almeida R."/>
            <person name="Alves-Gomes J.A."/>
            <person name="Andrade E.M."/>
            <person name="Araripe J."/>
            <person name="de Araujo M.F.F."/>
            <person name="Astolfi-Filho S."/>
            <person name="Azevedo V."/>
            <person name="Baptista A.J."/>
            <person name="Bataus L.A.M."/>
            <person name="Batista J.S."/>
            <person name="Belo A."/>
            <person name="van den Berg C."/>
            <person name="Bogo M."/>
            <person name="Bonatto S."/>
            <person name="Bordignon J."/>
            <person name="Brigido M.M."/>
            <person name="Brito C.A."/>
            <person name="Brocchi M."/>
            <person name="Burity H.A."/>
            <person name="Camargo A.A."/>
            <person name="Cardoso D.D.P."/>
            <person name="Carneiro N.P."/>
            <person name="Carraro D.M."/>
            <person name="Carvalho C.M.B."/>
            <person name="Cascardo J.C.M."/>
            <person name="Cavada B.S."/>
            <person name="Chueire L.M.O."/>
            <person name="Creczynski-Pasa T.B."/>
            <person name="Cunha-Junior N.C."/>
            <person name="Fagundes N."/>
            <person name="Falcao C.L."/>
            <person name="Fantinatti F."/>
            <person name="Farias I.P."/>
            <person name="Felipe M.S.S."/>
            <person name="Ferrari L.P."/>
            <person name="Ferro J.A."/>
            <person name="Ferro M.I.T."/>
            <person name="Franco G.R."/>
            <person name="Freitas N.S.A."/>
            <person name="Furlan L.R."/>
            <person name="Gazzinelli R.T."/>
            <person name="Gomes E.A."/>
            <person name="Goncalves P.R."/>
            <person name="Grangeiro T.B."/>
            <person name="Grattapaglia D."/>
            <person name="Grisard E.C."/>
            <person name="Hanna E.S."/>
            <person name="Jardim S.N."/>
            <person name="Laurino J."/>
            <person name="Leoi L.C.T."/>
            <person name="Lima L.F.A."/>
            <person name="Loureiro M.F."/>
            <person name="Lyra M.C.C.P."/>
            <person name="Madeira H.M.F."/>
            <person name="Manfio G.P."/>
            <person name="Maranhao A.Q."/>
            <person name="Martins W.S."/>
            <person name="di Mauro S.M.Z."/>
            <person name="de Medeiros S.R.B."/>
            <person name="Meissner R.V."/>
            <person name="Moreira M.A.M."/>
            <person name="Nascimento F.F."/>
            <person name="Nicolas M.F."/>
            <person name="Oliveira J.G."/>
            <person name="Oliveira S.C."/>
            <person name="Paixao R.F.C."/>
            <person name="Parente J.A."/>
            <person name="Pedrosa F.O."/>
            <person name="Pena S.D.J."/>
            <person name="Pereira J.O."/>
            <person name="Pereira M."/>
            <person name="Pinto L.S.R.C."/>
            <person name="Pinto L.S."/>
            <person name="Porto J.I.R."/>
            <person name="Potrich D.P."/>
            <person name="Ramalho-Neto C.E."/>
            <person name="Reis A.M.M."/>
            <person name="Rigo L.U."/>
            <person name="Rondinelli E."/>
            <person name="Santos E.B.P."/>
            <person name="Santos F.R."/>
            <person name="Schneider M.P.C."/>
            <person name="Seuanez H.N."/>
            <person name="Silva A.M.R."/>
            <person name="da Silva A.L.C."/>
            <person name="Silva D.W."/>
            <person name="Silva R."/>
            <person name="Simoes I.C."/>
            <person name="Simon D."/>
            <person name="Soares C.M.A."/>
            <person name="Soares R.B.A."/>
            <person name="Souza E.M."/>
            <person name="Souza K.R.L."/>
            <person name="Souza R.C."/>
            <person name="Steffens M.B.R."/>
            <person name="Steindel M."/>
            <person name="Teixeira S.R."/>
            <person name="Urmenyi T."/>
            <person name="Vettore A."/>
            <person name="Wassem R."/>
            <person name="Zaha A."/>
            <person name="Simpson A.J.G."/>
        </authorList>
    </citation>
    <scope>NUCLEOTIDE SEQUENCE [LARGE SCALE GENOMIC DNA]</scope>
    <source>
        <strain>ATCC 12472 / DSM 30191 / JCM 1249 / CCUG 213 / NBRC 12614 / NCIMB 9131 / NCTC 9757 / MK</strain>
    </source>
</reference>
<organism>
    <name type="scientific">Chromobacterium violaceum (strain ATCC 12472 / DSM 30191 / JCM 1249 / CCUG 213 / NBRC 12614 / NCIMB 9131 / NCTC 9757 / MK)</name>
    <dbReference type="NCBI Taxonomy" id="243365"/>
    <lineage>
        <taxon>Bacteria</taxon>
        <taxon>Pseudomonadati</taxon>
        <taxon>Pseudomonadota</taxon>
        <taxon>Betaproteobacteria</taxon>
        <taxon>Neisseriales</taxon>
        <taxon>Chromobacteriaceae</taxon>
        <taxon>Chromobacterium</taxon>
    </lineage>
</organism>
<protein>
    <recommendedName>
        <fullName evidence="1">Large ribosomal subunit protein uL1</fullName>
    </recommendedName>
    <alternativeName>
        <fullName evidence="2">50S ribosomal protein L1</fullName>
    </alternativeName>
</protein>
<proteinExistence type="inferred from homology"/>
<accession>Q7NQE3</accession>
<comment type="function">
    <text evidence="1">Binds directly to 23S rRNA. The L1 stalk is quite mobile in the ribosome, and is involved in E site tRNA release.</text>
</comment>
<comment type="function">
    <text evidence="1">Protein L1 is also a translational repressor protein, it controls the translation of the L11 operon by binding to its mRNA.</text>
</comment>
<comment type="subunit">
    <text evidence="1">Part of the 50S ribosomal subunit.</text>
</comment>
<comment type="similarity">
    <text evidence="1">Belongs to the universal ribosomal protein uL1 family.</text>
</comment>